<organism>
    <name type="scientific">Methanothermobacter thermautotrophicus (strain ATCC 29096 / DSM 1053 / JCM 10044 / NBRC 100330 / Delta H)</name>
    <name type="common">Methanobacterium thermoautotrophicum</name>
    <dbReference type="NCBI Taxonomy" id="187420"/>
    <lineage>
        <taxon>Archaea</taxon>
        <taxon>Methanobacteriati</taxon>
        <taxon>Methanobacteriota</taxon>
        <taxon>Methanomada group</taxon>
        <taxon>Methanobacteria</taxon>
        <taxon>Methanobacteriales</taxon>
        <taxon>Methanobacteriaceae</taxon>
        <taxon>Methanothermobacter</taxon>
    </lineage>
</organism>
<proteinExistence type="inferred from homology"/>
<protein>
    <recommendedName>
        <fullName>Probable cysteine desulfurase</fullName>
        <ecNumber>2.8.1.7</ecNumber>
    </recommendedName>
</protein>
<keyword id="KW-0663">Pyridoxal phosphate</keyword>
<keyword id="KW-1185">Reference proteome</keyword>
<keyword id="KW-0808">Transferase</keyword>
<dbReference type="EC" id="2.8.1.7"/>
<dbReference type="EMBL" id="AE000666">
    <property type="protein sequence ID" value="AAB85866.1"/>
    <property type="molecule type" value="Genomic_DNA"/>
</dbReference>
<dbReference type="PIR" id="G69051">
    <property type="entry name" value="G69051"/>
</dbReference>
<dbReference type="SMR" id="O27442"/>
<dbReference type="STRING" id="187420.MTH_1389"/>
<dbReference type="PaxDb" id="187420-MTH_1389"/>
<dbReference type="EnsemblBacteria" id="AAB85866">
    <property type="protein sequence ID" value="AAB85866"/>
    <property type="gene ID" value="MTH_1389"/>
</dbReference>
<dbReference type="KEGG" id="mth:MTH_1389"/>
<dbReference type="PATRIC" id="fig|187420.15.peg.1354"/>
<dbReference type="HOGENOM" id="CLU_003433_2_4_2"/>
<dbReference type="InParanoid" id="O27442"/>
<dbReference type="Proteomes" id="UP000005223">
    <property type="component" value="Chromosome"/>
</dbReference>
<dbReference type="GO" id="GO:0031071">
    <property type="term" value="F:cysteine desulfurase activity"/>
    <property type="evidence" value="ECO:0007669"/>
    <property type="project" value="UniProtKB-EC"/>
</dbReference>
<dbReference type="GO" id="GO:0030170">
    <property type="term" value="F:pyridoxal phosphate binding"/>
    <property type="evidence" value="ECO:0007669"/>
    <property type="project" value="InterPro"/>
</dbReference>
<dbReference type="GO" id="GO:0006534">
    <property type="term" value="P:cysteine metabolic process"/>
    <property type="evidence" value="ECO:0007669"/>
    <property type="project" value="InterPro"/>
</dbReference>
<dbReference type="CDD" id="cd06453">
    <property type="entry name" value="SufS_like"/>
    <property type="match status" value="1"/>
</dbReference>
<dbReference type="Gene3D" id="3.90.1150.10">
    <property type="entry name" value="Aspartate Aminotransferase, domain 1"/>
    <property type="match status" value="1"/>
</dbReference>
<dbReference type="Gene3D" id="3.40.640.10">
    <property type="entry name" value="Type I PLP-dependent aspartate aminotransferase-like (Major domain)"/>
    <property type="match status" value="1"/>
</dbReference>
<dbReference type="InterPro" id="IPR000192">
    <property type="entry name" value="Aminotrans_V_dom"/>
</dbReference>
<dbReference type="InterPro" id="IPR010970">
    <property type="entry name" value="Cys_dSase_SufS"/>
</dbReference>
<dbReference type="InterPro" id="IPR016454">
    <property type="entry name" value="Cysteine_dSase"/>
</dbReference>
<dbReference type="InterPro" id="IPR015424">
    <property type="entry name" value="PyrdxlP-dep_Trfase"/>
</dbReference>
<dbReference type="InterPro" id="IPR015421">
    <property type="entry name" value="PyrdxlP-dep_Trfase_major"/>
</dbReference>
<dbReference type="InterPro" id="IPR015422">
    <property type="entry name" value="PyrdxlP-dep_Trfase_small"/>
</dbReference>
<dbReference type="PANTHER" id="PTHR43586">
    <property type="entry name" value="CYSTEINE DESULFURASE"/>
    <property type="match status" value="1"/>
</dbReference>
<dbReference type="PANTHER" id="PTHR43586:SF8">
    <property type="entry name" value="CYSTEINE DESULFURASE 1, CHLOROPLASTIC"/>
    <property type="match status" value="1"/>
</dbReference>
<dbReference type="Pfam" id="PF00266">
    <property type="entry name" value="Aminotran_5"/>
    <property type="match status" value="1"/>
</dbReference>
<dbReference type="PIRSF" id="PIRSF005572">
    <property type="entry name" value="NifS"/>
    <property type="match status" value="1"/>
</dbReference>
<dbReference type="SUPFAM" id="SSF53383">
    <property type="entry name" value="PLP-dependent transferases"/>
    <property type="match status" value="1"/>
</dbReference>
<comment type="catalytic activity">
    <reaction>
        <text>(sulfur carrier)-H + L-cysteine = (sulfur carrier)-SH + L-alanine</text>
        <dbReference type="Rhea" id="RHEA:43892"/>
        <dbReference type="Rhea" id="RHEA-COMP:14737"/>
        <dbReference type="Rhea" id="RHEA-COMP:14739"/>
        <dbReference type="ChEBI" id="CHEBI:29917"/>
        <dbReference type="ChEBI" id="CHEBI:35235"/>
        <dbReference type="ChEBI" id="CHEBI:57972"/>
        <dbReference type="ChEBI" id="CHEBI:64428"/>
        <dbReference type="EC" id="2.8.1.7"/>
    </reaction>
</comment>
<comment type="cofactor">
    <cofactor evidence="1">
        <name>pyridoxal 5'-phosphate</name>
        <dbReference type="ChEBI" id="CHEBI:597326"/>
    </cofactor>
</comment>
<comment type="similarity">
    <text evidence="2">Belongs to the class-V pyridoxal-phosphate-dependent aminotransferase family. Csd subfamily.</text>
</comment>
<evidence type="ECO:0000250" key="1"/>
<evidence type="ECO:0000305" key="2"/>
<name>CSD_METTH</name>
<gene>
    <name type="primary">csd</name>
    <name type="ordered locus">MTH_1389</name>
</gene>
<accession>O27442</accession>
<sequence>MIFMRTEDVRRDIPLLRDHVYLDAASTTPTPLPVVRAMTEYFKEYNANTGRGAYSLVLRATRKLQEAREKVAGFINASSDEIVFTKNTSEAINIVAGGLRFRKGDSVVVPNIEHHSNFLPWLRLRERGVDVRVVKADEGGVVDPGRIEDAVDETTRLVTVTHISNALGTVQDVKEIGRIAHDVGALYLVDAAQSIGHMEVDVRAIGADFAAFPGHKGTLGPVGTGFLYCSTDVQGELEPLMLGGGTVLDVSEDGYVLEDFPAKFEAGTLNIAGFIGLGASIDYMNRIGIRRIQKHGMKMTEELHATVSSIDGIECYGDPQNIYGILSFNINNMDPHDVAKILDETAGICVRSGHHCAIPAMKHLALHETGGTVRASIHYYNTSEEIQLLGETLEEIAGMG</sequence>
<feature type="chain" id="PRO_0000150327" description="Probable cysteine desulfurase">
    <location>
        <begin position="1"/>
        <end position="400"/>
    </location>
</feature>
<feature type="modified residue" description="N6-(pyridoxal phosphate)lysine" evidence="1">
    <location>
        <position position="216"/>
    </location>
</feature>
<reference key="1">
    <citation type="journal article" date="1997" name="J. Bacteriol.">
        <title>Complete genome sequence of Methanobacterium thermoautotrophicum deltaH: functional analysis and comparative genomics.</title>
        <authorList>
            <person name="Smith D.R."/>
            <person name="Doucette-Stamm L.A."/>
            <person name="Deloughery C."/>
            <person name="Lee H.-M."/>
            <person name="Dubois J."/>
            <person name="Aldredge T."/>
            <person name="Bashirzadeh R."/>
            <person name="Blakely D."/>
            <person name="Cook R."/>
            <person name="Gilbert K."/>
            <person name="Harrison D."/>
            <person name="Hoang L."/>
            <person name="Keagle P."/>
            <person name="Lumm W."/>
            <person name="Pothier B."/>
            <person name="Qiu D."/>
            <person name="Spadafora R."/>
            <person name="Vicare R."/>
            <person name="Wang Y."/>
            <person name="Wierzbowski J."/>
            <person name="Gibson R."/>
            <person name="Jiwani N."/>
            <person name="Caruso A."/>
            <person name="Bush D."/>
            <person name="Safer H."/>
            <person name="Patwell D."/>
            <person name="Prabhakar S."/>
            <person name="McDougall S."/>
            <person name="Shimer G."/>
            <person name="Goyal A."/>
            <person name="Pietrovski S."/>
            <person name="Church G.M."/>
            <person name="Daniels C.J."/>
            <person name="Mao J.-I."/>
            <person name="Rice P."/>
            <person name="Noelling J."/>
            <person name="Reeve J.N."/>
        </authorList>
    </citation>
    <scope>NUCLEOTIDE SEQUENCE [LARGE SCALE GENOMIC DNA]</scope>
    <source>
        <strain>ATCC 29096 / DSM 1053 / JCM 10044 / NBRC 100330 / Delta H</strain>
    </source>
</reference>